<comment type="function">
    <text evidence="1">Protein S19 forms a complex with S13 that binds strongly to the 16S ribosomal RNA.</text>
</comment>
<comment type="similarity">
    <text evidence="1">Belongs to the universal ribosomal protein uS19 family.</text>
</comment>
<comment type="sequence caution" evidence="2">
    <conflict type="erroneous initiation">
        <sequence resource="EMBL-CDS" id="ABF31236"/>
    </conflict>
</comment>
<sequence length="92" mass="10622">MGRSLKKGPFVDEHLMKKVEAQANDEKKKVIKTWSRRSTIFPSFIGYTIAVYDGRKHVPVYIQEDMVGHKLGEFAPTRTYKGHAADDKKTRR</sequence>
<gene>
    <name evidence="1" type="primary">rpsS</name>
    <name type="ordered locus">MGAS9429_Spy0048</name>
</gene>
<feature type="chain" id="PRO_0000265443" description="Small ribosomal subunit protein uS19">
    <location>
        <begin position="1"/>
        <end position="92"/>
    </location>
</feature>
<organism>
    <name type="scientific">Streptococcus pyogenes serotype M12 (strain MGAS9429)</name>
    <dbReference type="NCBI Taxonomy" id="370551"/>
    <lineage>
        <taxon>Bacteria</taxon>
        <taxon>Bacillati</taxon>
        <taxon>Bacillota</taxon>
        <taxon>Bacilli</taxon>
        <taxon>Lactobacillales</taxon>
        <taxon>Streptococcaceae</taxon>
        <taxon>Streptococcus</taxon>
    </lineage>
</organism>
<keyword id="KW-0687">Ribonucleoprotein</keyword>
<keyword id="KW-0689">Ribosomal protein</keyword>
<keyword id="KW-0694">RNA-binding</keyword>
<keyword id="KW-0699">rRNA-binding</keyword>
<accession>Q1JP13</accession>
<evidence type="ECO:0000255" key="1">
    <source>
        <dbReference type="HAMAP-Rule" id="MF_00531"/>
    </source>
</evidence>
<evidence type="ECO:0000305" key="2"/>
<name>RS19_STRPC</name>
<dbReference type="EMBL" id="CP000259">
    <property type="protein sequence ID" value="ABF31236.1"/>
    <property type="status" value="ALT_INIT"/>
    <property type="molecule type" value="Genomic_DNA"/>
</dbReference>
<dbReference type="RefSeq" id="WP_000533765.1">
    <property type="nucleotide sequence ID" value="NC_008021.1"/>
</dbReference>
<dbReference type="SMR" id="Q1JP13"/>
<dbReference type="GeneID" id="98392396"/>
<dbReference type="KEGG" id="spk:MGAS9429_Spy0048"/>
<dbReference type="HOGENOM" id="CLU_144911_0_0_9"/>
<dbReference type="Proteomes" id="UP000002433">
    <property type="component" value="Chromosome"/>
</dbReference>
<dbReference type="GO" id="GO:0005737">
    <property type="term" value="C:cytoplasm"/>
    <property type="evidence" value="ECO:0007669"/>
    <property type="project" value="UniProtKB-ARBA"/>
</dbReference>
<dbReference type="GO" id="GO:0015935">
    <property type="term" value="C:small ribosomal subunit"/>
    <property type="evidence" value="ECO:0007669"/>
    <property type="project" value="InterPro"/>
</dbReference>
<dbReference type="GO" id="GO:0019843">
    <property type="term" value="F:rRNA binding"/>
    <property type="evidence" value="ECO:0007669"/>
    <property type="project" value="UniProtKB-UniRule"/>
</dbReference>
<dbReference type="GO" id="GO:0003735">
    <property type="term" value="F:structural constituent of ribosome"/>
    <property type="evidence" value="ECO:0007669"/>
    <property type="project" value="InterPro"/>
</dbReference>
<dbReference type="GO" id="GO:0000028">
    <property type="term" value="P:ribosomal small subunit assembly"/>
    <property type="evidence" value="ECO:0007669"/>
    <property type="project" value="TreeGrafter"/>
</dbReference>
<dbReference type="GO" id="GO:0006412">
    <property type="term" value="P:translation"/>
    <property type="evidence" value="ECO:0007669"/>
    <property type="project" value="UniProtKB-UniRule"/>
</dbReference>
<dbReference type="FunFam" id="3.30.860.10:FF:000001">
    <property type="entry name" value="30S ribosomal protein S19"/>
    <property type="match status" value="1"/>
</dbReference>
<dbReference type="Gene3D" id="3.30.860.10">
    <property type="entry name" value="30s Ribosomal Protein S19, Chain A"/>
    <property type="match status" value="1"/>
</dbReference>
<dbReference type="HAMAP" id="MF_00531">
    <property type="entry name" value="Ribosomal_uS19"/>
    <property type="match status" value="1"/>
</dbReference>
<dbReference type="InterPro" id="IPR002222">
    <property type="entry name" value="Ribosomal_uS19"/>
</dbReference>
<dbReference type="InterPro" id="IPR005732">
    <property type="entry name" value="Ribosomal_uS19_bac-type"/>
</dbReference>
<dbReference type="InterPro" id="IPR020934">
    <property type="entry name" value="Ribosomal_uS19_CS"/>
</dbReference>
<dbReference type="InterPro" id="IPR023575">
    <property type="entry name" value="Ribosomal_uS19_SF"/>
</dbReference>
<dbReference type="NCBIfam" id="TIGR01050">
    <property type="entry name" value="rpsS_bact"/>
    <property type="match status" value="1"/>
</dbReference>
<dbReference type="PANTHER" id="PTHR11880">
    <property type="entry name" value="RIBOSOMAL PROTEIN S19P FAMILY MEMBER"/>
    <property type="match status" value="1"/>
</dbReference>
<dbReference type="PANTHER" id="PTHR11880:SF8">
    <property type="entry name" value="SMALL RIBOSOMAL SUBUNIT PROTEIN US19M"/>
    <property type="match status" value="1"/>
</dbReference>
<dbReference type="Pfam" id="PF00203">
    <property type="entry name" value="Ribosomal_S19"/>
    <property type="match status" value="1"/>
</dbReference>
<dbReference type="PIRSF" id="PIRSF002144">
    <property type="entry name" value="Ribosomal_S19"/>
    <property type="match status" value="1"/>
</dbReference>
<dbReference type="PRINTS" id="PR00975">
    <property type="entry name" value="RIBOSOMALS19"/>
</dbReference>
<dbReference type="SUPFAM" id="SSF54570">
    <property type="entry name" value="Ribosomal protein S19"/>
    <property type="match status" value="1"/>
</dbReference>
<dbReference type="PROSITE" id="PS00323">
    <property type="entry name" value="RIBOSOMAL_S19"/>
    <property type="match status" value="1"/>
</dbReference>
<protein>
    <recommendedName>
        <fullName evidence="1">Small ribosomal subunit protein uS19</fullName>
    </recommendedName>
    <alternativeName>
        <fullName evidence="2">30S ribosomal protein S19</fullName>
    </alternativeName>
</protein>
<proteinExistence type="inferred from homology"/>
<reference key="1">
    <citation type="journal article" date="2006" name="Proc. Natl. Acad. Sci. U.S.A.">
        <title>Molecular genetic anatomy of inter- and intraserotype variation in the human bacterial pathogen group A Streptococcus.</title>
        <authorList>
            <person name="Beres S.B."/>
            <person name="Richter E.W."/>
            <person name="Nagiec M.J."/>
            <person name="Sumby P."/>
            <person name="Porcella S.F."/>
            <person name="DeLeo F.R."/>
            <person name="Musser J.M."/>
        </authorList>
    </citation>
    <scope>NUCLEOTIDE SEQUENCE [LARGE SCALE GENOMIC DNA]</scope>
    <source>
        <strain>MGAS9429</strain>
    </source>
</reference>